<gene>
    <name evidence="7" type="primary">GOX</name>
</gene>
<comment type="function">
    <text evidence="4 5 6">Glucose oxidase catalyzes the oxidation of beta-D-glucose to D-glucono-delta-lactone and hydrogen peroxide in the presence of molecular oxygen. D-glucono-delta-lactone is sequentially hydrolyzed by lactonase to D-gluconic acid, and the resulting hydrogen peroxide is hydrolyzed by catalase to oxygen and water (PubMed:18944912, PubMed:8795208). Glucose oxidase alone indirectly causes toxicity in the presence of glucose and is the active compound of the antifungal antibiotic talaron (PubMed:2279238). Responsible for inhibition of germination of microsclerotia of Verticillium dahliae (PubMed:8795208).</text>
</comment>
<comment type="catalytic activity">
    <reaction evidence="4 6">
        <text>beta-D-glucose + O2 = D-glucono-1,5-lactone + H2O2</text>
        <dbReference type="Rhea" id="RHEA:11428"/>
        <dbReference type="ChEBI" id="CHEBI:15379"/>
        <dbReference type="ChEBI" id="CHEBI:15903"/>
        <dbReference type="ChEBI" id="CHEBI:16217"/>
        <dbReference type="ChEBI" id="CHEBI:16240"/>
        <dbReference type="EC" id="1.1.3.4"/>
    </reaction>
    <physiologicalReaction direction="left-to-right" evidence="4 6">
        <dbReference type="Rhea" id="RHEA:11429"/>
    </physiologicalReaction>
</comment>
<comment type="cofactor">
    <cofactor evidence="1">
        <name>FAD</name>
        <dbReference type="ChEBI" id="CHEBI:57692"/>
    </cofactor>
</comment>
<comment type="subunit">
    <text evidence="1">Homodimer.</text>
</comment>
<comment type="subcellular location">
    <subcellularLocation>
        <location evidence="4 6">Secreted</location>
    </subcellularLocation>
    <subcellularLocation>
        <location evidence="4">Secreted</location>
        <location evidence="4">Cell wall</location>
    </subcellularLocation>
    <subcellularLocation>
        <location evidence="4">Cytoplasmic vesicle</location>
    </subcellularLocation>
</comment>
<comment type="induction">
    <text evidence="6">Expression is induced in the presence of glucose but not xylose.</text>
</comment>
<comment type="biotechnology">
    <text evidence="6">Glucose oxidase of Talaromyces flavus is a major factor in biocontrol of verticillium dahliae, a soilborne plant pathogen which microsclerotia are 100 times more sensitive to hydrogen peroxide than propagules of many other microbess.</text>
</comment>
<comment type="miscellaneous">
    <text evidence="4">Glucose oxidase activity in culture filtrates of T.flavus is extremely stable and culture filtrates retain 13.2% of their original glucose oxidase activity after 14 days of incubation at 25 degrees Celsius. Glucose oxidase is also stable at elevated temperatures. After 5 days of incubation at 30, 45, or 50 degrees Celsius, culture filtrates retains 41.0, 44.0, and 28.7% original glucose oxidase activity, respectively. After 9 days of incubation at 45 or 50 degrees Celsius, culture filtrates retains 30.0 and 4.7% original glucose oxidase activity, respectively. At 55 degrees Celsius, glucose oxidase activity is substantially less stable, however, after 24 h of incubation at 55 degrees Celsius, glucose oxidase activity is still detectable.</text>
</comment>
<comment type="similarity">
    <text evidence="8">Belongs to the GMC oxidoreductase family.</text>
</comment>
<keyword id="KW-0134">Cell wall</keyword>
<keyword id="KW-0968">Cytoplasmic vesicle</keyword>
<keyword id="KW-1015">Disulfide bond</keyword>
<keyword id="KW-0274">FAD</keyword>
<keyword id="KW-0285">Flavoprotein</keyword>
<keyword id="KW-0325">Glycoprotein</keyword>
<keyword id="KW-0560">Oxidoreductase</keyword>
<keyword id="KW-0964">Secreted</keyword>
<keyword id="KW-0732">Signal</keyword>
<accession>Q92452</accession>
<dbReference type="EC" id="1.1.3.4" evidence="4 6"/>
<dbReference type="EMBL" id="U56240">
    <property type="protein sequence ID" value="AAB09442.1"/>
    <property type="molecule type" value="Genomic_DNA"/>
</dbReference>
<dbReference type="SMR" id="Q92452"/>
<dbReference type="GlyCosmos" id="Q92452">
    <property type="glycosylation" value="7 sites, No reported glycans"/>
</dbReference>
<dbReference type="GO" id="GO:0031410">
    <property type="term" value="C:cytoplasmic vesicle"/>
    <property type="evidence" value="ECO:0007669"/>
    <property type="project" value="UniProtKB-KW"/>
</dbReference>
<dbReference type="GO" id="GO:0005576">
    <property type="term" value="C:extracellular region"/>
    <property type="evidence" value="ECO:0007669"/>
    <property type="project" value="UniProtKB-SubCell"/>
</dbReference>
<dbReference type="GO" id="GO:0046562">
    <property type="term" value="F:beta-D-glucose oxidase activity"/>
    <property type="evidence" value="ECO:0007669"/>
    <property type="project" value="UniProtKB-EC"/>
</dbReference>
<dbReference type="GO" id="GO:0050660">
    <property type="term" value="F:flavin adenine dinucleotide binding"/>
    <property type="evidence" value="ECO:0007669"/>
    <property type="project" value="InterPro"/>
</dbReference>
<dbReference type="GO" id="GO:0044550">
    <property type="term" value="P:secondary metabolite biosynthetic process"/>
    <property type="evidence" value="ECO:0007669"/>
    <property type="project" value="UniProtKB-ARBA"/>
</dbReference>
<dbReference type="Gene3D" id="3.50.50.60">
    <property type="entry name" value="FAD/NAD(P)-binding domain"/>
    <property type="match status" value="1"/>
</dbReference>
<dbReference type="Gene3D" id="4.10.450.10">
    <property type="entry name" value="Glucose Oxidase, domain 2"/>
    <property type="match status" value="1"/>
</dbReference>
<dbReference type="Gene3D" id="3.30.560.10">
    <property type="entry name" value="Glucose Oxidase, domain 3"/>
    <property type="match status" value="1"/>
</dbReference>
<dbReference type="InterPro" id="IPR036188">
    <property type="entry name" value="FAD/NAD-bd_sf"/>
</dbReference>
<dbReference type="InterPro" id="IPR027424">
    <property type="entry name" value="Glucose_Oxidase_domain_2"/>
</dbReference>
<dbReference type="InterPro" id="IPR012132">
    <property type="entry name" value="GMC_OxRdtase"/>
</dbReference>
<dbReference type="InterPro" id="IPR000172">
    <property type="entry name" value="GMC_OxRdtase_N"/>
</dbReference>
<dbReference type="InterPro" id="IPR007867">
    <property type="entry name" value="GMC_OxRtase_C"/>
</dbReference>
<dbReference type="PANTHER" id="PTHR11552">
    <property type="entry name" value="GLUCOSE-METHANOL-CHOLINE GMC OXIDOREDUCTASE"/>
    <property type="match status" value="1"/>
</dbReference>
<dbReference type="PANTHER" id="PTHR11552:SF201">
    <property type="entry name" value="GLUCOSE-METHANOL-CHOLINE OXIDOREDUCTASE N-TERMINAL DOMAIN-CONTAINING PROTEIN"/>
    <property type="match status" value="1"/>
</dbReference>
<dbReference type="Pfam" id="PF05199">
    <property type="entry name" value="GMC_oxred_C"/>
    <property type="match status" value="1"/>
</dbReference>
<dbReference type="Pfam" id="PF00732">
    <property type="entry name" value="GMC_oxred_N"/>
    <property type="match status" value="1"/>
</dbReference>
<dbReference type="PIRSF" id="PIRSF000137">
    <property type="entry name" value="Alcohol_oxidase"/>
    <property type="match status" value="1"/>
</dbReference>
<dbReference type="SUPFAM" id="SSF54373">
    <property type="entry name" value="FAD-linked reductases, C-terminal domain"/>
    <property type="match status" value="1"/>
</dbReference>
<dbReference type="SUPFAM" id="SSF51905">
    <property type="entry name" value="FAD/NAD(P)-binding domain"/>
    <property type="match status" value="1"/>
</dbReference>
<dbReference type="PROSITE" id="PS00623">
    <property type="entry name" value="GMC_OXRED_1"/>
    <property type="match status" value="1"/>
</dbReference>
<dbReference type="PROSITE" id="PS00624">
    <property type="entry name" value="GMC_OXRED_2"/>
    <property type="match status" value="1"/>
</dbReference>
<reference key="1">
    <citation type="journal article" date="1997" name="Curr. Genet.">
        <title>Isolation of the glucose oxidase gene from Talaromyces flavus and characterisation of its role in the biocontrol of Verticillium dahliae.</title>
        <authorList>
            <person name="Murray F.R."/>
            <person name="Llewellyn D.J."/>
            <person name="Peacock W.J."/>
            <person name="Dennis E.S."/>
        </authorList>
    </citation>
    <scope>NUCLEOTIDE SEQUENCE [GENOMIC DNA]</scope>
    <scope>FUNCTION</scope>
    <source>
        <strain>ATCC 32908</strain>
    </source>
</reference>
<reference key="2">
    <citation type="journal article" date="1990" name="Can. J. Microbiol.">
        <title>Glucose oxidase as the antifungal principle of talaron from Talaromyces flavus.</title>
        <authorList>
            <person name="Kim K.K."/>
            <person name="Fravel D.R."/>
            <person name="Papavizas G.C."/>
        </authorList>
    </citation>
    <scope>FUNCTION</scope>
</reference>
<reference key="3">
    <citation type="journal article" date="1996" name="Appl. Environ. Microbiol.">
        <title>In vitro analysis of the role of glucose oxidase from Talaromyces flavus in biocontrol of the plant pathogen Verticillium dahliae.</title>
        <authorList>
            <person name="Stosz S.K."/>
            <person name="Fravel D.R."/>
            <person name="Roberts D.P."/>
        </authorList>
    </citation>
    <scope>SUBCELLULAR LOCATION</scope>
    <scope>INDUCTION</scope>
    <scope>FUNCTION</scope>
    <scope>CATALYTIC ACTIVITY</scope>
</reference>
<reference key="4">
    <citation type="journal article" date="1998" name="Phytopathology">
        <title>Localization of Glucose Oxidase with Immunocytochemistry in the Biocontrol Fungus Talaromyces flavus.</title>
        <authorList>
            <person name="Stosz S.K."/>
            <person name="Roy S."/>
            <person name="Murphy C."/>
            <person name="Wergin W."/>
            <person name="Fravel D.R."/>
        </authorList>
    </citation>
    <scope>SUBCELLULAR LOCATION</scope>
    <scope>FUNCTION</scope>
    <scope>CATALYTIC ACTIVITY</scope>
    <scope>PROTEIN STABILITY</scope>
</reference>
<protein>
    <recommendedName>
        <fullName evidence="7">Glucose oxidase</fullName>
        <shortName evidence="8">GOD</shortName>
        <shortName evidence="8">GOx</shortName>
        <ecNumber evidence="4 6">1.1.3.4</ecNumber>
    </recommendedName>
    <alternativeName>
        <fullName evidence="8">Beta-D-glucose:oxygen 1-oxido-reductase</fullName>
    </alternativeName>
</protein>
<feature type="signal peptide" evidence="2">
    <location>
        <begin position="1"/>
        <end position="18"/>
    </location>
</feature>
<feature type="chain" id="PRO_0000012339" description="Glucose oxidase">
    <location>
        <begin position="19"/>
        <end position="605"/>
    </location>
</feature>
<feature type="active site" description="Proton acceptor" evidence="1">
    <location>
        <position position="538"/>
    </location>
</feature>
<feature type="binding site" evidence="1">
    <location>
        <position position="52"/>
    </location>
    <ligand>
        <name>FAD</name>
        <dbReference type="ChEBI" id="CHEBI:57692"/>
    </ligand>
</feature>
<feature type="binding site" evidence="1">
    <location>
        <position position="53"/>
    </location>
    <ligand>
        <name>FAD</name>
        <dbReference type="ChEBI" id="CHEBI:57692"/>
    </ligand>
</feature>
<feature type="binding site" evidence="1">
    <location>
        <position position="73"/>
    </location>
    <ligand>
        <name>FAD</name>
        <dbReference type="ChEBI" id="CHEBI:57692"/>
    </ligand>
</feature>
<feature type="binding site" evidence="1">
    <location>
        <position position="125"/>
    </location>
    <ligand>
        <name>FAD</name>
        <dbReference type="ChEBI" id="CHEBI:57692"/>
    </ligand>
</feature>
<feature type="binding site" evidence="1">
    <location>
        <position position="129"/>
    </location>
    <ligand>
        <name>FAD</name>
        <dbReference type="ChEBI" id="CHEBI:57692"/>
    </ligand>
</feature>
<feature type="binding site" evidence="1">
    <location>
        <position position="130"/>
    </location>
    <ligand>
        <name>FAD</name>
        <dbReference type="ChEBI" id="CHEBI:57692"/>
    </ligand>
</feature>
<feature type="binding site" evidence="1">
    <location>
        <position position="132"/>
    </location>
    <ligand>
        <name>FAD</name>
        <dbReference type="ChEBI" id="CHEBI:57692"/>
    </ligand>
</feature>
<feature type="binding site" evidence="1">
    <location>
        <position position="272"/>
    </location>
    <ligand>
        <name>FAD</name>
        <dbReference type="ChEBI" id="CHEBI:57692"/>
    </ligand>
</feature>
<feature type="binding site" evidence="1">
    <location>
        <position position="559"/>
    </location>
    <ligand>
        <name>O2</name>
        <dbReference type="ChEBI" id="CHEBI:15379"/>
    </ligand>
</feature>
<feature type="binding site" evidence="1">
    <location>
        <position position="560"/>
    </location>
    <ligand>
        <name>O2</name>
        <dbReference type="ChEBI" id="CHEBI:15379"/>
    </ligand>
</feature>
<feature type="binding site" evidence="1">
    <location>
        <position position="571"/>
    </location>
    <ligand>
        <name>FAD</name>
        <dbReference type="ChEBI" id="CHEBI:57692"/>
    </ligand>
</feature>
<feature type="binding site" evidence="1">
    <location>
        <position position="583"/>
    </location>
    <ligand>
        <name>FAD</name>
        <dbReference type="ChEBI" id="CHEBI:57692"/>
    </ligand>
</feature>
<feature type="glycosylation site" description="N-linked (GlcNAc...) asparagine" evidence="3">
    <location>
        <position position="111"/>
    </location>
</feature>
<feature type="glycosylation site" description="N-linked (GlcNAc...) asparagine" evidence="3">
    <location>
        <position position="183"/>
    </location>
</feature>
<feature type="glycosylation site" description="N-linked (GlcNAc...) asparagine" evidence="3">
    <location>
        <position position="190"/>
    </location>
</feature>
<feature type="glycosylation site" description="N-linked (GlcNAc...) asparagine" evidence="3">
    <location>
        <position position="335"/>
    </location>
</feature>
<feature type="glycosylation site" description="N-linked (GlcNAc...) asparagine" evidence="3">
    <location>
        <position position="375"/>
    </location>
</feature>
<feature type="glycosylation site" description="N-linked (GlcNAc...) asparagine" evidence="3">
    <location>
        <position position="410"/>
    </location>
</feature>
<feature type="glycosylation site" description="N-linked (GlcNAc...) asparagine" evidence="3">
    <location>
        <position position="519"/>
    </location>
</feature>
<feature type="disulfide bond" evidence="1">
    <location>
        <begin position="186"/>
        <end position="228"/>
    </location>
</feature>
<sequence>MVSVFLSTLLLAAATVQAYLPAQQIDVQSSLLSDPSKVAGKTYDYIIAGGGLTGLTVAAKLTENPKIKVLVIEKGFYESNDGAIIEDPNAYGQIFGTTVDQNYLTVPLINNRTNNIKAGKGLGGSTLINGDSWTRPDKVQIDSWEKVFGMEGWNWDSMFEYMKKAEAARAPTAAQLAAGHYFNATCHGTNGTVQSGARDNGQPWSPIMKALMNTVSALGVPVQQDFLCGHPRGVSMIMNNVDENQVRVDAARAWLLPSYQRPNLEILTGQMVGKVLFKQTASGPQAVGVNFGTNKAVNFDVFAKHEVLLAAGSAISPLILEYSGIGLKSVLDQANVTQLLDLPVGINMQDQTTTTVSSRASAAGAGQGQAVFFANFTETFGDYAPQARELLNTKLDQWAEETVARGGFHNVTALKVQYENYRNWLLDEDVAFAELFMDTEGKINFDLWDLIPFTRGSVHILSSDPYLWQFANDPKFFLNEFDLLGQAAASKLARDLTSQGAMKEYFAGETLPGYNLVENATLSQWSDYVLQNFRPNWHAVSSCSMMSRELGGVVDATAKVYGTQGLRVIDGSIPPTQVSSHVMTIFYGMALKVADAILDDYAKSA</sequence>
<name>GOX_TALFL</name>
<evidence type="ECO:0000250" key="1">
    <source>
        <dbReference type="UniProtKB" id="P13006"/>
    </source>
</evidence>
<evidence type="ECO:0000255" key="2"/>
<evidence type="ECO:0000255" key="3">
    <source>
        <dbReference type="PROSITE-ProRule" id="PRU00498"/>
    </source>
</evidence>
<evidence type="ECO:0000269" key="4">
    <source>
    </source>
</evidence>
<evidence type="ECO:0000269" key="5">
    <source>
    </source>
</evidence>
<evidence type="ECO:0000269" key="6">
    <source>
    </source>
</evidence>
<evidence type="ECO:0000303" key="7">
    <source>
    </source>
</evidence>
<evidence type="ECO:0000305" key="8"/>
<organism>
    <name type="scientific">Talaromyces flavus</name>
    <dbReference type="NCBI Taxonomy" id="5095"/>
    <lineage>
        <taxon>Eukaryota</taxon>
        <taxon>Fungi</taxon>
        <taxon>Dikarya</taxon>
        <taxon>Ascomycota</taxon>
        <taxon>Pezizomycotina</taxon>
        <taxon>Eurotiomycetes</taxon>
        <taxon>Eurotiomycetidae</taxon>
        <taxon>Eurotiales</taxon>
        <taxon>Trichocomaceae</taxon>
        <taxon>Talaromyces</taxon>
        <taxon>Talaromyces sect. Talaromyces</taxon>
    </lineage>
</organism>
<proteinExistence type="evidence at protein level"/>